<organism>
    <name type="scientific">Xanthomonas campestris pv. campestris (strain ATCC 33913 / DSM 3586 / NCPPB 528 / LMG 568 / P 25)</name>
    <dbReference type="NCBI Taxonomy" id="190485"/>
    <lineage>
        <taxon>Bacteria</taxon>
        <taxon>Pseudomonadati</taxon>
        <taxon>Pseudomonadota</taxon>
        <taxon>Gammaproteobacteria</taxon>
        <taxon>Lysobacterales</taxon>
        <taxon>Lysobacteraceae</taxon>
        <taxon>Xanthomonas</taxon>
    </lineage>
</organism>
<reference key="1">
    <citation type="journal article" date="2002" name="Nature">
        <title>Comparison of the genomes of two Xanthomonas pathogens with differing host specificities.</title>
        <authorList>
            <person name="da Silva A.C.R."/>
            <person name="Ferro J.A."/>
            <person name="Reinach F.C."/>
            <person name="Farah C.S."/>
            <person name="Furlan L.R."/>
            <person name="Quaggio R.B."/>
            <person name="Monteiro-Vitorello C.B."/>
            <person name="Van Sluys M.A."/>
            <person name="Almeida N.F. Jr."/>
            <person name="Alves L.M.C."/>
            <person name="do Amaral A.M."/>
            <person name="Bertolini M.C."/>
            <person name="Camargo L.E.A."/>
            <person name="Camarotte G."/>
            <person name="Cannavan F."/>
            <person name="Cardozo J."/>
            <person name="Chambergo F."/>
            <person name="Ciapina L.P."/>
            <person name="Cicarelli R.M.B."/>
            <person name="Coutinho L.L."/>
            <person name="Cursino-Santos J.R."/>
            <person name="El-Dorry H."/>
            <person name="Faria J.B."/>
            <person name="Ferreira A.J.S."/>
            <person name="Ferreira R.C.C."/>
            <person name="Ferro M.I.T."/>
            <person name="Formighieri E.F."/>
            <person name="Franco M.C."/>
            <person name="Greggio C.C."/>
            <person name="Gruber A."/>
            <person name="Katsuyama A.M."/>
            <person name="Kishi L.T."/>
            <person name="Leite R.P."/>
            <person name="Lemos E.G.M."/>
            <person name="Lemos M.V.F."/>
            <person name="Locali E.C."/>
            <person name="Machado M.A."/>
            <person name="Madeira A.M.B.N."/>
            <person name="Martinez-Rossi N.M."/>
            <person name="Martins E.C."/>
            <person name="Meidanis J."/>
            <person name="Menck C.F.M."/>
            <person name="Miyaki C.Y."/>
            <person name="Moon D.H."/>
            <person name="Moreira L.M."/>
            <person name="Novo M.T.M."/>
            <person name="Okura V.K."/>
            <person name="Oliveira M.C."/>
            <person name="Oliveira V.R."/>
            <person name="Pereira H.A."/>
            <person name="Rossi A."/>
            <person name="Sena J.A.D."/>
            <person name="Silva C."/>
            <person name="de Souza R.F."/>
            <person name="Spinola L.A.F."/>
            <person name="Takita M.A."/>
            <person name="Tamura R.E."/>
            <person name="Teixeira E.C."/>
            <person name="Tezza R.I.D."/>
            <person name="Trindade dos Santos M."/>
            <person name="Truffi D."/>
            <person name="Tsai S.M."/>
            <person name="White F.F."/>
            <person name="Setubal J.C."/>
            <person name="Kitajima J.P."/>
        </authorList>
    </citation>
    <scope>NUCLEOTIDE SEQUENCE [LARGE SCALE GENOMIC DNA]</scope>
    <source>
        <strain>ATCC 33913 / DSM 3586 / NCPPB 528 / LMG 568 / P 25</strain>
    </source>
</reference>
<keyword id="KW-0028">Amino-acid biosynthesis</keyword>
<keyword id="KW-0057">Aromatic amino acid biosynthesis</keyword>
<keyword id="KW-0456">Lyase</keyword>
<keyword id="KW-0663">Pyridoxal phosphate</keyword>
<keyword id="KW-1185">Reference proteome</keyword>
<keyword id="KW-0822">Tryptophan biosynthesis</keyword>
<sequence>MSAQPISDFHAYPDAAGHFGKFGGRFVAETLIAPLQELSAAYDLARQDPAFIAEYDKDLKHYVGRPSPIYHAERLSREVGGAQILLKREDLNHTGAHKINNTIGQALLASRMGKTRIIAETGAGQHGVASATVAARLGLECVVYMGATDIERQKINVYRMQLLGAKVIPVTSGSATLKDALNEAMRDWVSNVQDTFYIIGTVAGPDPYPRMVRDFNAIVGREARAQMLEDYGRLPDAISACVGGGSNAIGLFHAFLNDPGVKIYGAEAAGDGIASGRHAASIAAGRPGVLHGNRTYVICDDDGQIIETHSVSAGLDYPGVGPEHAFLSDSGRAVYQGITDDEALAAFHLLAHTEGILAALESSHAVAQSIKLAREMPKDALVLCNLSGRGDKDVHTIAAREGMVL</sequence>
<dbReference type="EC" id="4.2.1.20" evidence="1"/>
<dbReference type="EMBL" id="AE008922">
    <property type="protein sequence ID" value="AAM41815.1"/>
    <property type="molecule type" value="Genomic_DNA"/>
</dbReference>
<dbReference type="RefSeq" id="NP_637891.1">
    <property type="nucleotide sequence ID" value="NC_003902.1"/>
</dbReference>
<dbReference type="RefSeq" id="WP_011037673.1">
    <property type="nucleotide sequence ID" value="NC_003902.1"/>
</dbReference>
<dbReference type="SMR" id="Q8P7R8"/>
<dbReference type="STRING" id="190485.XCC2543"/>
<dbReference type="EnsemblBacteria" id="AAM41815">
    <property type="protein sequence ID" value="AAM41815"/>
    <property type="gene ID" value="XCC2543"/>
</dbReference>
<dbReference type="GeneID" id="58012851"/>
<dbReference type="KEGG" id="xcc:XCC2543"/>
<dbReference type="PATRIC" id="fig|190485.4.peg.2709"/>
<dbReference type="eggNOG" id="COG0133">
    <property type="taxonomic scope" value="Bacteria"/>
</dbReference>
<dbReference type="HOGENOM" id="CLU_016734_3_1_6"/>
<dbReference type="OrthoDB" id="9766131at2"/>
<dbReference type="UniPathway" id="UPA00035">
    <property type="reaction ID" value="UER00044"/>
</dbReference>
<dbReference type="Proteomes" id="UP000001010">
    <property type="component" value="Chromosome"/>
</dbReference>
<dbReference type="GO" id="GO:0005737">
    <property type="term" value="C:cytoplasm"/>
    <property type="evidence" value="ECO:0000318"/>
    <property type="project" value="GO_Central"/>
</dbReference>
<dbReference type="GO" id="GO:0004834">
    <property type="term" value="F:tryptophan synthase activity"/>
    <property type="evidence" value="ECO:0007669"/>
    <property type="project" value="UniProtKB-UniRule"/>
</dbReference>
<dbReference type="GO" id="GO:0000162">
    <property type="term" value="P:L-tryptophan biosynthetic process"/>
    <property type="evidence" value="ECO:0000318"/>
    <property type="project" value="GO_Central"/>
</dbReference>
<dbReference type="CDD" id="cd06446">
    <property type="entry name" value="Trp-synth_B"/>
    <property type="match status" value="1"/>
</dbReference>
<dbReference type="FunFam" id="3.40.50.1100:FF:000001">
    <property type="entry name" value="Tryptophan synthase beta chain"/>
    <property type="match status" value="1"/>
</dbReference>
<dbReference type="FunFam" id="3.40.50.1100:FF:000004">
    <property type="entry name" value="Tryptophan synthase beta chain"/>
    <property type="match status" value="1"/>
</dbReference>
<dbReference type="Gene3D" id="3.40.50.1100">
    <property type="match status" value="2"/>
</dbReference>
<dbReference type="HAMAP" id="MF_00133">
    <property type="entry name" value="Trp_synth_beta"/>
    <property type="match status" value="1"/>
</dbReference>
<dbReference type="InterPro" id="IPR006653">
    <property type="entry name" value="Trp_synth_b_CS"/>
</dbReference>
<dbReference type="InterPro" id="IPR006654">
    <property type="entry name" value="Trp_synth_beta"/>
</dbReference>
<dbReference type="InterPro" id="IPR023026">
    <property type="entry name" value="Trp_synth_beta/beta-like"/>
</dbReference>
<dbReference type="InterPro" id="IPR001926">
    <property type="entry name" value="TrpB-like_PALP"/>
</dbReference>
<dbReference type="InterPro" id="IPR036052">
    <property type="entry name" value="TrpB-like_PALP_sf"/>
</dbReference>
<dbReference type="NCBIfam" id="TIGR00263">
    <property type="entry name" value="trpB"/>
    <property type="match status" value="1"/>
</dbReference>
<dbReference type="PANTHER" id="PTHR48077:SF3">
    <property type="entry name" value="TRYPTOPHAN SYNTHASE"/>
    <property type="match status" value="1"/>
</dbReference>
<dbReference type="PANTHER" id="PTHR48077">
    <property type="entry name" value="TRYPTOPHAN SYNTHASE-RELATED"/>
    <property type="match status" value="1"/>
</dbReference>
<dbReference type="Pfam" id="PF00291">
    <property type="entry name" value="PALP"/>
    <property type="match status" value="1"/>
</dbReference>
<dbReference type="PIRSF" id="PIRSF001413">
    <property type="entry name" value="Trp_syn_beta"/>
    <property type="match status" value="1"/>
</dbReference>
<dbReference type="SUPFAM" id="SSF53686">
    <property type="entry name" value="Tryptophan synthase beta subunit-like PLP-dependent enzymes"/>
    <property type="match status" value="1"/>
</dbReference>
<dbReference type="PROSITE" id="PS00168">
    <property type="entry name" value="TRP_SYNTHASE_BETA"/>
    <property type="match status" value="1"/>
</dbReference>
<proteinExistence type="inferred from homology"/>
<evidence type="ECO:0000255" key="1">
    <source>
        <dbReference type="HAMAP-Rule" id="MF_00133"/>
    </source>
</evidence>
<accession>Q8P7R8</accession>
<gene>
    <name evidence="1" type="primary">trpB</name>
    <name type="ordered locus">XCC2543</name>
</gene>
<protein>
    <recommendedName>
        <fullName evidence="1">Tryptophan synthase beta chain</fullName>
        <ecNumber evidence="1">4.2.1.20</ecNumber>
    </recommendedName>
</protein>
<name>TRPB_XANCP</name>
<feature type="chain" id="PRO_0000099026" description="Tryptophan synthase beta chain">
    <location>
        <begin position="1"/>
        <end position="405"/>
    </location>
</feature>
<feature type="modified residue" description="N6-(pyridoxal phosphate)lysine" evidence="1">
    <location>
        <position position="98"/>
    </location>
</feature>
<comment type="function">
    <text evidence="1">The beta subunit is responsible for the synthesis of L-tryptophan from indole and L-serine.</text>
</comment>
<comment type="catalytic activity">
    <reaction evidence="1">
        <text>(1S,2R)-1-C-(indol-3-yl)glycerol 3-phosphate + L-serine = D-glyceraldehyde 3-phosphate + L-tryptophan + H2O</text>
        <dbReference type="Rhea" id="RHEA:10532"/>
        <dbReference type="ChEBI" id="CHEBI:15377"/>
        <dbReference type="ChEBI" id="CHEBI:33384"/>
        <dbReference type="ChEBI" id="CHEBI:57912"/>
        <dbReference type="ChEBI" id="CHEBI:58866"/>
        <dbReference type="ChEBI" id="CHEBI:59776"/>
        <dbReference type="EC" id="4.2.1.20"/>
    </reaction>
</comment>
<comment type="cofactor">
    <cofactor evidence="1">
        <name>pyridoxal 5'-phosphate</name>
        <dbReference type="ChEBI" id="CHEBI:597326"/>
    </cofactor>
</comment>
<comment type="pathway">
    <text evidence="1">Amino-acid biosynthesis; L-tryptophan biosynthesis; L-tryptophan from chorismate: step 5/5.</text>
</comment>
<comment type="subunit">
    <text evidence="1">Tetramer of two alpha and two beta chains.</text>
</comment>
<comment type="similarity">
    <text evidence="1">Belongs to the TrpB family.</text>
</comment>